<organism>
    <name type="scientific">Streptomyces griseus subsp. griseus (strain JCM 4626 / CBS 651.72 / NBRC 13350 / KCC S-0626 / ISP 5235)</name>
    <dbReference type="NCBI Taxonomy" id="455632"/>
    <lineage>
        <taxon>Bacteria</taxon>
        <taxon>Bacillati</taxon>
        <taxon>Actinomycetota</taxon>
        <taxon>Actinomycetes</taxon>
        <taxon>Kitasatosporales</taxon>
        <taxon>Streptomycetaceae</taxon>
        <taxon>Streptomyces</taxon>
    </lineage>
</organism>
<gene>
    <name type="ordered locus">SGR_6403</name>
</gene>
<comment type="function">
    <text evidence="1">Catalyzes the formation of 4-(hydroxymethyl)-2-furancarboxaldehyde phosphate (4-HFC-P) from two molecules of glyceraldehyde-3-P (GA-3-P).</text>
</comment>
<comment type="catalytic activity">
    <reaction evidence="1">
        <text>2 D-glyceraldehyde 3-phosphate = 4-(hydroxymethyl)-2-furancarboxaldehyde phosphate + phosphate + 2 H2O</text>
        <dbReference type="Rhea" id="RHEA:43536"/>
        <dbReference type="ChEBI" id="CHEBI:15377"/>
        <dbReference type="ChEBI" id="CHEBI:43474"/>
        <dbReference type="ChEBI" id="CHEBI:59776"/>
        <dbReference type="ChEBI" id="CHEBI:83407"/>
        <dbReference type="EC" id="4.2.3.153"/>
    </reaction>
</comment>
<comment type="similarity">
    <text evidence="2">Belongs to the MfnB family.</text>
</comment>
<name>Y6403_STRGG</name>
<evidence type="ECO:0000250" key="1">
    <source>
        <dbReference type="UniProtKB" id="Q58499"/>
    </source>
</evidence>
<evidence type="ECO:0000305" key="2"/>
<proteinExistence type="inferred from homology"/>
<sequence>MLLLISPDGVEEALACATAAEHLDIVDVKKPDEGSLGANFPWVIREIRAAVPADKPVSATVGDVPYKPGTVAQAALGAAVSGATYIKVGLYGCATPDQAIDVMRGVVRAVKDFRADAFVVASGYADAHRIGCVNPLALPDIARRAGADAAMLDTAIKDGTRLFDHVPPEGCAEFVRLAHEAGLLAALAGSVKAADLATLTRIGTDIVGVRGAVCEGGDRDAGRIQPRLVAAFRAEMDRHARAFAAAPAAS</sequence>
<reference key="1">
    <citation type="journal article" date="2008" name="J. Bacteriol.">
        <title>Genome sequence of the streptomycin-producing microorganism Streptomyces griseus IFO 13350.</title>
        <authorList>
            <person name="Ohnishi Y."/>
            <person name="Ishikawa J."/>
            <person name="Hara H."/>
            <person name="Suzuki H."/>
            <person name="Ikenoya M."/>
            <person name="Ikeda H."/>
            <person name="Yamashita A."/>
            <person name="Hattori M."/>
            <person name="Horinouchi S."/>
        </authorList>
    </citation>
    <scope>NUCLEOTIDE SEQUENCE [LARGE SCALE GENOMIC DNA]</scope>
    <source>
        <strain>JCM 4626 / CBS 651.72 / NBRC 13350 / KCC S-0626 / ISP 5235</strain>
    </source>
</reference>
<protein>
    <recommendedName>
        <fullName evidence="1">Putative (5-formylfuran-3-yl)methyl phosphate synthase</fullName>
        <ecNumber evidence="1">4.2.3.153</ecNumber>
    </recommendedName>
    <alternativeName>
        <fullName evidence="1">4-(hydroxymethyl)-2-furancarboxaldehyde-phosphate synthase</fullName>
        <shortName evidence="1">4-HFC-P synthase</shortName>
    </alternativeName>
</protein>
<accession>B1W5S5</accession>
<keyword id="KW-0456">Lyase</keyword>
<keyword id="KW-0704">Schiff base</keyword>
<feature type="chain" id="PRO_1000131716" description="Putative (5-formylfuran-3-yl)methyl phosphate synthase">
    <location>
        <begin position="1"/>
        <end position="250"/>
    </location>
</feature>
<feature type="active site" description="Schiff-base intermediate with substrate" evidence="1">
    <location>
        <position position="29"/>
    </location>
</feature>
<feature type="active site" description="Proton acceptor" evidence="1">
    <location>
        <position position="87"/>
    </location>
</feature>
<dbReference type="EC" id="4.2.3.153" evidence="1"/>
<dbReference type="EMBL" id="AP009493">
    <property type="protein sequence ID" value="BAG23232.1"/>
    <property type="molecule type" value="Genomic_DNA"/>
</dbReference>
<dbReference type="RefSeq" id="WP_012381917.1">
    <property type="nucleotide sequence ID" value="NC_010572.1"/>
</dbReference>
<dbReference type="SMR" id="B1W5S5"/>
<dbReference type="KEGG" id="sgr:SGR_6403"/>
<dbReference type="PATRIC" id="fig|455632.4.peg.6564"/>
<dbReference type="eggNOG" id="COG1891">
    <property type="taxonomic scope" value="Bacteria"/>
</dbReference>
<dbReference type="HOGENOM" id="CLU_068659_0_0_11"/>
<dbReference type="Proteomes" id="UP000001685">
    <property type="component" value="Chromosome"/>
</dbReference>
<dbReference type="GO" id="GO:0016829">
    <property type="term" value="F:lyase activity"/>
    <property type="evidence" value="ECO:0007669"/>
    <property type="project" value="UniProtKB-KW"/>
</dbReference>
<dbReference type="InterPro" id="IPR007565">
    <property type="entry name" value="4HFCP_synth"/>
</dbReference>
<dbReference type="InterPro" id="IPR011060">
    <property type="entry name" value="RibuloseP-bd_barrel"/>
</dbReference>
<dbReference type="NCBIfam" id="NF002573">
    <property type="entry name" value="PRK02227.1-1"/>
    <property type="match status" value="1"/>
</dbReference>
<dbReference type="Pfam" id="PF04476">
    <property type="entry name" value="4HFCP_synth"/>
    <property type="match status" value="1"/>
</dbReference>
<dbReference type="PIRSF" id="PIRSF015957">
    <property type="entry name" value="UCP015957"/>
    <property type="match status" value="1"/>
</dbReference>
<dbReference type="SUPFAM" id="SSF51366">
    <property type="entry name" value="Ribulose-phoshate binding barrel"/>
    <property type="match status" value="1"/>
</dbReference>